<name>SYGA_STRP3</name>
<accession>P0DG36</accession>
<accession>Q8K662</accession>
<organism>
    <name type="scientific">Streptococcus pyogenes serotype M3 (strain ATCC BAA-595 / MGAS315)</name>
    <dbReference type="NCBI Taxonomy" id="198466"/>
    <lineage>
        <taxon>Bacteria</taxon>
        <taxon>Bacillati</taxon>
        <taxon>Bacillota</taxon>
        <taxon>Bacilli</taxon>
        <taxon>Lactobacillales</taxon>
        <taxon>Streptococcaceae</taxon>
        <taxon>Streptococcus</taxon>
    </lineage>
</organism>
<protein>
    <recommendedName>
        <fullName evidence="1">Glycine--tRNA ligase alpha subunit</fullName>
        <ecNumber evidence="1">6.1.1.14</ecNumber>
    </recommendedName>
    <alternativeName>
        <fullName evidence="1">Glycyl-tRNA synthetase alpha subunit</fullName>
        <shortName evidence="1">GlyRS</shortName>
    </alternativeName>
</protein>
<feature type="chain" id="PRO_0000072872" description="Glycine--tRNA ligase alpha subunit">
    <location>
        <begin position="1"/>
        <end position="308"/>
    </location>
</feature>
<comment type="catalytic activity">
    <reaction evidence="1">
        <text>tRNA(Gly) + glycine + ATP = glycyl-tRNA(Gly) + AMP + diphosphate</text>
        <dbReference type="Rhea" id="RHEA:16013"/>
        <dbReference type="Rhea" id="RHEA-COMP:9664"/>
        <dbReference type="Rhea" id="RHEA-COMP:9683"/>
        <dbReference type="ChEBI" id="CHEBI:30616"/>
        <dbReference type="ChEBI" id="CHEBI:33019"/>
        <dbReference type="ChEBI" id="CHEBI:57305"/>
        <dbReference type="ChEBI" id="CHEBI:78442"/>
        <dbReference type="ChEBI" id="CHEBI:78522"/>
        <dbReference type="ChEBI" id="CHEBI:456215"/>
        <dbReference type="EC" id="6.1.1.14"/>
    </reaction>
</comment>
<comment type="subunit">
    <text evidence="1">Tetramer of two alpha and two beta subunits.</text>
</comment>
<comment type="subcellular location">
    <subcellularLocation>
        <location evidence="1">Cytoplasm</location>
    </subcellularLocation>
</comment>
<comment type="similarity">
    <text evidence="1">Belongs to the class-II aminoacyl-tRNA synthetase family.</text>
</comment>
<proteinExistence type="inferred from homology"/>
<keyword id="KW-0030">Aminoacyl-tRNA synthetase</keyword>
<keyword id="KW-0067">ATP-binding</keyword>
<keyword id="KW-0963">Cytoplasm</keyword>
<keyword id="KW-0436">Ligase</keyword>
<keyword id="KW-0547">Nucleotide-binding</keyword>
<keyword id="KW-0648">Protein biosynthesis</keyword>
<dbReference type="EC" id="6.1.1.14" evidence="1"/>
<dbReference type="EMBL" id="AE014074">
    <property type="protein sequence ID" value="AAM80079.1"/>
    <property type="molecule type" value="Genomic_DNA"/>
</dbReference>
<dbReference type="RefSeq" id="WP_011054912.1">
    <property type="nucleotide sequence ID" value="NC_004070.1"/>
</dbReference>
<dbReference type="SMR" id="P0DG36"/>
<dbReference type="KEGG" id="spg:SpyM3_1472"/>
<dbReference type="HOGENOM" id="CLU_057066_1_0_9"/>
<dbReference type="Proteomes" id="UP000000564">
    <property type="component" value="Chromosome"/>
</dbReference>
<dbReference type="GO" id="GO:0005829">
    <property type="term" value="C:cytosol"/>
    <property type="evidence" value="ECO:0007669"/>
    <property type="project" value="TreeGrafter"/>
</dbReference>
<dbReference type="GO" id="GO:0005524">
    <property type="term" value="F:ATP binding"/>
    <property type="evidence" value="ECO:0007669"/>
    <property type="project" value="UniProtKB-UniRule"/>
</dbReference>
<dbReference type="GO" id="GO:0140096">
    <property type="term" value="F:catalytic activity, acting on a protein"/>
    <property type="evidence" value="ECO:0007669"/>
    <property type="project" value="UniProtKB-ARBA"/>
</dbReference>
<dbReference type="GO" id="GO:0004820">
    <property type="term" value="F:glycine-tRNA ligase activity"/>
    <property type="evidence" value="ECO:0007669"/>
    <property type="project" value="UniProtKB-UniRule"/>
</dbReference>
<dbReference type="GO" id="GO:0016740">
    <property type="term" value="F:transferase activity"/>
    <property type="evidence" value="ECO:0007669"/>
    <property type="project" value="UniProtKB-ARBA"/>
</dbReference>
<dbReference type="GO" id="GO:0006426">
    <property type="term" value="P:glycyl-tRNA aminoacylation"/>
    <property type="evidence" value="ECO:0007669"/>
    <property type="project" value="UniProtKB-UniRule"/>
</dbReference>
<dbReference type="CDD" id="cd00733">
    <property type="entry name" value="GlyRS_alpha_core"/>
    <property type="match status" value="1"/>
</dbReference>
<dbReference type="FunFam" id="3.30.930.10:FF:000006">
    <property type="entry name" value="Glycine--tRNA ligase alpha subunit"/>
    <property type="match status" value="1"/>
</dbReference>
<dbReference type="Gene3D" id="3.30.930.10">
    <property type="entry name" value="Bira Bifunctional Protein, Domain 2"/>
    <property type="match status" value="1"/>
</dbReference>
<dbReference type="Gene3D" id="1.20.58.180">
    <property type="entry name" value="Class II aaRS and biotin synthetases, domain 2"/>
    <property type="match status" value="1"/>
</dbReference>
<dbReference type="HAMAP" id="MF_00254">
    <property type="entry name" value="Gly_tRNA_synth_alpha"/>
    <property type="match status" value="1"/>
</dbReference>
<dbReference type="InterPro" id="IPR045864">
    <property type="entry name" value="aa-tRNA-synth_II/BPL/LPL"/>
</dbReference>
<dbReference type="InterPro" id="IPR006194">
    <property type="entry name" value="Gly-tRNA-synth_heterodimer"/>
</dbReference>
<dbReference type="InterPro" id="IPR002310">
    <property type="entry name" value="Gly-tRNA_ligase_asu"/>
</dbReference>
<dbReference type="NCBIfam" id="TIGR00388">
    <property type="entry name" value="glyQ"/>
    <property type="match status" value="1"/>
</dbReference>
<dbReference type="NCBIfam" id="NF006827">
    <property type="entry name" value="PRK09348.1"/>
    <property type="match status" value="1"/>
</dbReference>
<dbReference type="PANTHER" id="PTHR30075:SF2">
    <property type="entry name" value="GLYCINE--TRNA LIGASE, CHLOROPLASTIC_MITOCHONDRIAL 2"/>
    <property type="match status" value="1"/>
</dbReference>
<dbReference type="PANTHER" id="PTHR30075">
    <property type="entry name" value="GLYCYL-TRNA SYNTHETASE"/>
    <property type="match status" value="1"/>
</dbReference>
<dbReference type="Pfam" id="PF02091">
    <property type="entry name" value="tRNA-synt_2e"/>
    <property type="match status" value="1"/>
</dbReference>
<dbReference type="PRINTS" id="PR01044">
    <property type="entry name" value="TRNASYNTHGA"/>
</dbReference>
<dbReference type="SUPFAM" id="SSF55681">
    <property type="entry name" value="Class II aaRS and biotin synthetases"/>
    <property type="match status" value="1"/>
</dbReference>
<dbReference type="PROSITE" id="PS50861">
    <property type="entry name" value="AA_TRNA_LIGASE_II_GLYAB"/>
    <property type="match status" value="1"/>
</dbReference>
<evidence type="ECO:0000255" key="1">
    <source>
        <dbReference type="HAMAP-Rule" id="MF_00254"/>
    </source>
</evidence>
<gene>
    <name evidence="1" type="primary">glyQ</name>
    <name type="ordered locus">SpyM3_1472</name>
</gene>
<sequence>MSKKLTFQEIILTLQQYWNDQGCMLMQAYDNEKGAGTMSPYTFLRAIGPEPWNAAYVEPSRRPADGRYGENPNRLYQHHQFQVVMKPSPSNIQELYLASLEKLGINPLEHDIRFVEDNWENPSTGSAGLGWEVWLDGMEITQFTYFQQVGGLATSPVTAEVTYGLERLASYIQEVDSVYDIEWAPGVKYGEIFLQPEYEHSKYSFEISDQDMLLENFEKFEKEASRALEEGLVHPAYDYVLKCSHTFNLLDARGAVSVTERAGYIARIRNLARVVAKTFVAERKKLGFPLLDEATRAILLAEDANKSI</sequence>
<reference key="1">
    <citation type="journal article" date="2002" name="Proc. Natl. Acad. Sci. U.S.A.">
        <title>Genome sequence of a serotype M3 strain of group A Streptococcus: phage-encoded toxins, the high-virulence phenotype, and clone emergence.</title>
        <authorList>
            <person name="Beres S.B."/>
            <person name="Sylva G.L."/>
            <person name="Barbian K.D."/>
            <person name="Lei B."/>
            <person name="Hoff J.S."/>
            <person name="Mammarella N.D."/>
            <person name="Liu M.-Y."/>
            <person name="Smoot J.C."/>
            <person name="Porcella S.F."/>
            <person name="Parkins L.D."/>
            <person name="Campbell D.S."/>
            <person name="Smith T.M."/>
            <person name="McCormick J.K."/>
            <person name="Leung D.Y.M."/>
            <person name="Schlievert P.M."/>
            <person name="Musser J.M."/>
        </authorList>
    </citation>
    <scope>NUCLEOTIDE SEQUENCE [LARGE SCALE GENOMIC DNA]</scope>
    <source>
        <strain>ATCC BAA-595 / MGAS315</strain>
    </source>
</reference>